<sequence>MPVTIVLGGQWGDEGKGKITDALAATADIVVRPNGSTNAGHTVVTDEGVFKLHVIPSGILYPHCTCIIGAGVAVSPPDFLREIESLRERHPRLGQLYVSDRAHVIMPYHPLLDLYEERRRGAAGIGTTLRGNGPAFTDKIARRGIRIADLLPGSERSLRHKLETLLPEKNTLFIHLYGESPLDLDQLFEQARTWGEALAPYVIAAEVFVQDALDAGKSVIIEAAQGTMLDPDYGTYPYVTSSSPTAAGACQGAGVAPTQVDRIVGVFKAYTTRVGAGPFPTELTDETGQLIRERGREYGTTTGRPRRVGWFDAVAARYSARLNGMTEAALTKLDMLDPLPEVRICVGYRIDNQEVSAPPAQVERYAAVEPVYEVLPGWQCDTSQVTSFDDLPPEAQRYVARIEELIGVPITMIGVGPARRQILWRPAGALT</sequence>
<keyword id="KW-0963">Cytoplasm</keyword>
<keyword id="KW-0342">GTP-binding</keyword>
<keyword id="KW-0436">Ligase</keyword>
<keyword id="KW-0460">Magnesium</keyword>
<keyword id="KW-0479">Metal-binding</keyword>
<keyword id="KW-0547">Nucleotide-binding</keyword>
<keyword id="KW-0658">Purine biosynthesis</keyword>
<keyword id="KW-1185">Reference proteome</keyword>
<feature type="chain" id="PRO_1000116489" description="Adenylosuccinate synthetase">
    <location>
        <begin position="1"/>
        <end position="431"/>
    </location>
</feature>
<feature type="active site" description="Proton acceptor" evidence="1">
    <location>
        <position position="13"/>
    </location>
</feature>
<feature type="active site" description="Proton donor" evidence="1">
    <location>
        <position position="41"/>
    </location>
</feature>
<feature type="binding site" evidence="1">
    <location>
        <begin position="12"/>
        <end position="18"/>
    </location>
    <ligand>
        <name>GTP</name>
        <dbReference type="ChEBI" id="CHEBI:37565"/>
    </ligand>
</feature>
<feature type="binding site" description="in other chain" evidence="1">
    <location>
        <begin position="13"/>
        <end position="16"/>
    </location>
    <ligand>
        <name>IMP</name>
        <dbReference type="ChEBI" id="CHEBI:58053"/>
        <note>ligand shared between dimeric partners</note>
    </ligand>
</feature>
<feature type="binding site" evidence="1">
    <location>
        <position position="13"/>
    </location>
    <ligand>
        <name>Mg(2+)</name>
        <dbReference type="ChEBI" id="CHEBI:18420"/>
    </ligand>
</feature>
<feature type="binding site" description="in other chain" evidence="1">
    <location>
        <begin position="38"/>
        <end position="41"/>
    </location>
    <ligand>
        <name>IMP</name>
        <dbReference type="ChEBI" id="CHEBI:58053"/>
        <note>ligand shared between dimeric partners</note>
    </ligand>
</feature>
<feature type="binding site" evidence="1">
    <location>
        <begin position="40"/>
        <end position="42"/>
    </location>
    <ligand>
        <name>GTP</name>
        <dbReference type="ChEBI" id="CHEBI:37565"/>
    </ligand>
</feature>
<feature type="binding site" evidence="1">
    <location>
        <position position="40"/>
    </location>
    <ligand>
        <name>Mg(2+)</name>
        <dbReference type="ChEBI" id="CHEBI:18420"/>
    </ligand>
</feature>
<feature type="binding site" description="in other chain" evidence="1">
    <location>
        <position position="128"/>
    </location>
    <ligand>
        <name>IMP</name>
        <dbReference type="ChEBI" id="CHEBI:58053"/>
        <note>ligand shared between dimeric partners</note>
    </ligand>
</feature>
<feature type="binding site" evidence="1">
    <location>
        <position position="142"/>
    </location>
    <ligand>
        <name>IMP</name>
        <dbReference type="ChEBI" id="CHEBI:58053"/>
        <note>ligand shared between dimeric partners</note>
    </ligand>
</feature>
<feature type="binding site" description="in other chain" evidence="1">
    <location>
        <position position="225"/>
    </location>
    <ligand>
        <name>IMP</name>
        <dbReference type="ChEBI" id="CHEBI:58053"/>
        <note>ligand shared between dimeric partners</note>
    </ligand>
</feature>
<feature type="binding site" description="in other chain" evidence="1">
    <location>
        <position position="240"/>
    </location>
    <ligand>
        <name>IMP</name>
        <dbReference type="ChEBI" id="CHEBI:58053"/>
        <note>ligand shared between dimeric partners</note>
    </ligand>
</feature>
<feature type="binding site" evidence="1">
    <location>
        <begin position="300"/>
        <end position="306"/>
    </location>
    <ligand>
        <name>substrate</name>
    </ligand>
</feature>
<feature type="binding site" description="in other chain" evidence="1">
    <location>
        <position position="304"/>
    </location>
    <ligand>
        <name>IMP</name>
        <dbReference type="ChEBI" id="CHEBI:58053"/>
        <note>ligand shared between dimeric partners</note>
    </ligand>
</feature>
<feature type="binding site" evidence="1">
    <location>
        <position position="306"/>
    </location>
    <ligand>
        <name>GTP</name>
        <dbReference type="ChEBI" id="CHEBI:37565"/>
    </ligand>
</feature>
<feature type="binding site" evidence="1">
    <location>
        <begin position="332"/>
        <end position="334"/>
    </location>
    <ligand>
        <name>GTP</name>
        <dbReference type="ChEBI" id="CHEBI:37565"/>
    </ligand>
</feature>
<feature type="binding site" evidence="1">
    <location>
        <begin position="414"/>
        <end position="416"/>
    </location>
    <ligand>
        <name>GTP</name>
        <dbReference type="ChEBI" id="CHEBI:37565"/>
    </ligand>
</feature>
<evidence type="ECO:0000255" key="1">
    <source>
        <dbReference type="HAMAP-Rule" id="MF_00011"/>
    </source>
</evidence>
<dbReference type="EC" id="6.3.4.4" evidence="1"/>
<dbReference type="EMBL" id="CP001275">
    <property type="protein sequence ID" value="ACM05868.1"/>
    <property type="molecule type" value="Genomic_DNA"/>
</dbReference>
<dbReference type="RefSeq" id="WP_012642058.1">
    <property type="nucleotide sequence ID" value="NC_011959.1"/>
</dbReference>
<dbReference type="SMR" id="B9KYV8"/>
<dbReference type="STRING" id="309801.trd_0662"/>
<dbReference type="KEGG" id="tro:trd_0662"/>
<dbReference type="eggNOG" id="COG0104">
    <property type="taxonomic scope" value="Bacteria"/>
</dbReference>
<dbReference type="HOGENOM" id="CLU_029848_0_0_0"/>
<dbReference type="OrthoDB" id="9807553at2"/>
<dbReference type="UniPathway" id="UPA00075">
    <property type="reaction ID" value="UER00335"/>
</dbReference>
<dbReference type="Proteomes" id="UP000000447">
    <property type="component" value="Chromosome"/>
</dbReference>
<dbReference type="GO" id="GO:0005737">
    <property type="term" value="C:cytoplasm"/>
    <property type="evidence" value="ECO:0007669"/>
    <property type="project" value="UniProtKB-SubCell"/>
</dbReference>
<dbReference type="GO" id="GO:0004019">
    <property type="term" value="F:adenylosuccinate synthase activity"/>
    <property type="evidence" value="ECO:0007669"/>
    <property type="project" value="UniProtKB-UniRule"/>
</dbReference>
<dbReference type="GO" id="GO:0005525">
    <property type="term" value="F:GTP binding"/>
    <property type="evidence" value="ECO:0007669"/>
    <property type="project" value="UniProtKB-UniRule"/>
</dbReference>
<dbReference type="GO" id="GO:0000287">
    <property type="term" value="F:magnesium ion binding"/>
    <property type="evidence" value="ECO:0007669"/>
    <property type="project" value="UniProtKB-UniRule"/>
</dbReference>
<dbReference type="GO" id="GO:0044208">
    <property type="term" value="P:'de novo' AMP biosynthetic process"/>
    <property type="evidence" value="ECO:0007669"/>
    <property type="project" value="UniProtKB-UniRule"/>
</dbReference>
<dbReference type="GO" id="GO:0046040">
    <property type="term" value="P:IMP metabolic process"/>
    <property type="evidence" value="ECO:0007669"/>
    <property type="project" value="TreeGrafter"/>
</dbReference>
<dbReference type="CDD" id="cd03108">
    <property type="entry name" value="AdSS"/>
    <property type="match status" value="1"/>
</dbReference>
<dbReference type="FunFam" id="1.10.300.10:FF:000001">
    <property type="entry name" value="Adenylosuccinate synthetase"/>
    <property type="match status" value="1"/>
</dbReference>
<dbReference type="FunFam" id="3.90.170.10:FF:000001">
    <property type="entry name" value="Adenylosuccinate synthetase"/>
    <property type="match status" value="1"/>
</dbReference>
<dbReference type="Gene3D" id="3.40.440.10">
    <property type="entry name" value="Adenylosuccinate Synthetase, subunit A, domain 1"/>
    <property type="match status" value="1"/>
</dbReference>
<dbReference type="Gene3D" id="1.10.300.10">
    <property type="entry name" value="Adenylosuccinate Synthetase, subunit A, domain 2"/>
    <property type="match status" value="1"/>
</dbReference>
<dbReference type="Gene3D" id="3.90.170.10">
    <property type="entry name" value="Adenylosuccinate Synthetase, subunit A, domain 3"/>
    <property type="match status" value="1"/>
</dbReference>
<dbReference type="HAMAP" id="MF_00011">
    <property type="entry name" value="Adenylosucc_synth"/>
    <property type="match status" value="1"/>
</dbReference>
<dbReference type="InterPro" id="IPR018220">
    <property type="entry name" value="Adenylosuccin_syn_GTP-bd"/>
</dbReference>
<dbReference type="InterPro" id="IPR042109">
    <property type="entry name" value="Adenylosuccinate_synth_dom1"/>
</dbReference>
<dbReference type="InterPro" id="IPR042110">
    <property type="entry name" value="Adenylosuccinate_synth_dom2"/>
</dbReference>
<dbReference type="InterPro" id="IPR042111">
    <property type="entry name" value="Adenylosuccinate_synth_dom3"/>
</dbReference>
<dbReference type="InterPro" id="IPR001114">
    <property type="entry name" value="Adenylosuccinate_synthetase"/>
</dbReference>
<dbReference type="InterPro" id="IPR027417">
    <property type="entry name" value="P-loop_NTPase"/>
</dbReference>
<dbReference type="NCBIfam" id="NF002223">
    <property type="entry name" value="PRK01117.1"/>
    <property type="match status" value="1"/>
</dbReference>
<dbReference type="NCBIfam" id="TIGR00184">
    <property type="entry name" value="purA"/>
    <property type="match status" value="1"/>
</dbReference>
<dbReference type="PANTHER" id="PTHR11846">
    <property type="entry name" value="ADENYLOSUCCINATE SYNTHETASE"/>
    <property type="match status" value="1"/>
</dbReference>
<dbReference type="PANTHER" id="PTHR11846:SF0">
    <property type="entry name" value="ADENYLOSUCCINATE SYNTHETASE"/>
    <property type="match status" value="1"/>
</dbReference>
<dbReference type="Pfam" id="PF00709">
    <property type="entry name" value="Adenylsucc_synt"/>
    <property type="match status" value="1"/>
</dbReference>
<dbReference type="SMART" id="SM00788">
    <property type="entry name" value="Adenylsucc_synt"/>
    <property type="match status" value="1"/>
</dbReference>
<dbReference type="SUPFAM" id="SSF52540">
    <property type="entry name" value="P-loop containing nucleoside triphosphate hydrolases"/>
    <property type="match status" value="1"/>
</dbReference>
<dbReference type="PROSITE" id="PS01266">
    <property type="entry name" value="ADENYLOSUCCIN_SYN_1"/>
    <property type="match status" value="1"/>
</dbReference>
<organism>
    <name type="scientific">Thermomicrobium roseum (strain ATCC 27502 / DSM 5159 / P-2)</name>
    <dbReference type="NCBI Taxonomy" id="309801"/>
    <lineage>
        <taxon>Bacteria</taxon>
        <taxon>Pseudomonadati</taxon>
        <taxon>Thermomicrobiota</taxon>
        <taxon>Thermomicrobia</taxon>
        <taxon>Thermomicrobiales</taxon>
        <taxon>Thermomicrobiaceae</taxon>
        <taxon>Thermomicrobium</taxon>
    </lineage>
</organism>
<accession>B9KYV8</accession>
<protein>
    <recommendedName>
        <fullName evidence="1">Adenylosuccinate synthetase</fullName>
        <shortName evidence="1">AMPSase</shortName>
        <shortName evidence="1">AdSS</shortName>
        <ecNumber evidence="1">6.3.4.4</ecNumber>
    </recommendedName>
    <alternativeName>
        <fullName evidence="1">IMP--aspartate ligase</fullName>
    </alternativeName>
</protein>
<name>PURA_THERP</name>
<gene>
    <name evidence="1" type="primary">purA</name>
    <name type="ordered locus">trd_0662</name>
</gene>
<comment type="function">
    <text evidence="1">Plays an important role in the de novo pathway of purine nucleotide biosynthesis. Catalyzes the first committed step in the biosynthesis of AMP from IMP.</text>
</comment>
<comment type="catalytic activity">
    <reaction evidence="1">
        <text>IMP + L-aspartate + GTP = N(6)-(1,2-dicarboxyethyl)-AMP + GDP + phosphate + 2 H(+)</text>
        <dbReference type="Rhea" id="RHEA:15753"/>
        <dbReference type="ChEBI" id="CHEBI:15378"/>
        <dbReference type="ChEBI" id="CHEBI:29991"/>
        <dbReference type="ChEBI" id="CHEBI:37565"/>
        <dbReference type="ChEBI" id="CHEBI:43474"/>
        <dbReference type="ChEBI" id="CHEBI:57567"/>
        <dbReference type="ChEBI" id="CHEBI:58053"/>
        <dbReference type="ChEBI" id="CHEBI:58189"/>
        <dbReference type="EC" id="6.3.4.4"/>
    </reaction>
</comment>
<comment type="cofactor">
    <cofactor evidence="1">
        <name>Mg(2+)</name>
        <dbReference type="ChEBI" id="CHEBI:18420"/>
    </cofactor>
    <text evidence="1">Binds 1 Mg(2+) ion per subunit.</text>
</comment>
<comment type="pathway">
    <text evidence="1">Purine metabolism; AMP biosynthesis via de novo pathway; AMP from IMP: step 1/2.</text>
</comment>
<comment type="subunit">
    <text evidence="1">Homodimer.</text>
</comment>
<comment type="subcellular location">
    <subcellularLocation>
        <location evidence="1">Cytoplasm</location>
    </subcellularLocation>
</comment>
<comment type="similarity">
    <text evidence="1">Belongs to the adenylosuccinate synthetase family.</text>
</comment>
<reference key="1">
    <citation type="journal article" date="2009" name="PLoS ONE">
        <title>Complete genome sequence of the aerobic CO-oxidizing thermophile Thermomicrobium roseum.</title>
        <authorList>
            <person name="Wu D."/>
            <person name="Raymond J."/>
            <person name="Wu M."/>
            <person name="Chatterji S."/>
            <person name="Ren Q."/>
            <person name="Graham J.E."/>
            <person name="Bryant D.A."/>
            <person name="Robb F."/>
            <person name="Colman A."/>
            <person name="Tallon L.J."/>
            <person name="Badger J.H."/>
            <person name="Madupu R."/>
            <person name="Ward N.L."/>
            <person name="Eisen J.A."/>
        </authorList>
    </citation>
    <scope>NUCLEOTIDE SEQUENCE [LARGE SCALE GENOMIC DNA]</scope>
    <source>
        <strain>ATCC 27502 / DSM 5159 / P-2</strain>
    </source>
</reference>
<proteinExistence type="inferred from homology"/>